<sequence>MASATDSRYGQKESSDQNFDYMFKILIIGNSSVGKTSFLFRYADDSFTPAFVSTVGIDFKVKTIYRNDKRIKLQIWDTAGQERYRTITTAYYRGAMGFILMYDITNEESFNAVQDWSTQIKTYSWDNAQVLLVGNKCDMEDERVVSSERGRQLADHLGFEFFEASAKDNINVKQTFERLVDVICEKMSESLDTADPAVTGAKQGPQLTDQQAPPHQDCAC</sequence>
<comment type="function">
    <text evidence="2 3 8 10 11 12">The small GTPases Rab are key regulators of intracellular membrane trafficking, from the formation of transport vesicles to their fusion with membranes (By similarity). Rabs cycle between an inactive GDP-bound form and an active GTP-bound form that is able to recruit to membranes different sets of downstream effectors directly responsible for vesicle formation, movement, tethering and fusion (By similarity). RAB3A plays a central role in regulated exocytosis and secretion. Controls the recruitment, tethering and docking of secretory vesicles to the plasma membrane (PubMed:21689256). Upon stimulation, switches to its active GTP-bound form, cycles to vesicles and recruits effectors such as RIMS1, RIMS2, Rabphilin-3A/RPH3A, RPH3AL or SYTL4 to help the docking of vesicules onto the plasma membrane (PubMed:18407218). Upon GTP hydrolysis by GTPase-activating protein, dissociates from the vesicle membrane allowing the exocytosis to proceed (PubMed:17149709). Stimulates insulin secretion through interaction with RIMS2 and RPH3AL effectors in pancreatic beta cells (By similarity). Regulates calcium-dependent lysosome exocytosis and plasma membrane repair (PMR) via the interaction with 2 effectors, SYTL4 and myosin-9/MYH9 (By similarity). Acts as a positive regulator of acrosome content secretion in sperm cells by interacting with RIMS1 (By similarity). Plays a role in the regulation of dopamine release by interacting with synaptotagmin I/SYT (PubMed:28057568).</text>
</comment>
<comment type="catalytic activity">
    <reaction evidence="2">
        <text>GTP + H2O = GDP + phosphate + H(+)</text>
        <dbReference type="Rhea" id="RHEA:19669"/>
        <dbReference type="ChEBI" id="CHEBI:15377"/>
        <dbReference type="ChEBI" id="CHEBI:15378"/>
        <dbReference type="ChEBI" id="CHEBI:37565"/>
        <dbReference type="ChEBI" id="CHEBI:43474"/>
        <dbReference type="ChEBI" id="CHEBI:58189"/>
        <dbReference type="EC" id="3.6.5.2"/>
    </reaction>
    <physiologicalReaction direction="left-to-right" evidence="2">
        <dbReference type="Rhea" id="RHEA:19670"/>
    </physiologicalReaction>
</comment>
<comment type="cofactor">
    <cofactor evidence="5 6">
        <name>Mg(2+)</name>
        <dbReference type="ChEBI" id="CHEBI:18420"/>
    </cofactor>
</comment>
<comment type="activity regulation">
    <text evidence="2 3 14 15">Regulated by guanine nucleotide exchange factors (GEFs) including RAB3IL1 and MADD which promote the exchange of bound GDP for free GTP (PubMed:9020086). Regulated by GTPase activating proteins (GAPs) including RAB3GAP1 and TBC1D10B which increase the GTP hydrolysis activity (By similarity). Inhibited by GDP dissociation inhibitors (GDIs) which prevent Rab-GDP dissociation (Probable). Interacts with MADD (via uDENN domain); the GTP-bound form is preferred for interaction (By similarity).</text>
</comment>
<comment type="subunit">
    <text evidence="2 3 5 7 11 12 13">Interacts with RIMS1 and RIMS2 (By similarity) (PubMed:10748113). Interacts with Rabphilin-3A/RPH3A and Rab effector Noc2/RPH3AL (By similarity) (PubMed:10025402). Interacts with SYTL4 (By similarity). Interacts with RAB3IP (PubMed:7532276). Interacts with SGSM1 and SGSM3 (By similarity). Interacts with SYT1 (PubMed:28057568). Interacts with MYH9; this interaction is essential for lysosome exocytosis and plasma membrane repair (By similarity). Interacts with STXBP1; this interaction promotes RAB3A dissociation from the vesicle membrane (PubMed:21689256). Interacts with SNCA (By similarity). Interacts with GDI1, GDI2 and CHM; phosphorylation at Thr-86 disrupts these interactions (By similarity).</text>
</comment>
<comment type="interaction">
    <interactant intactId="EBI-440126">
        <id>P63012</id>
    </interactant>
    <interactant intactId="EBI-1027524">
        <id>P47709</id>
        <label>Rph3a</label>
    </interactant>
    <organismsDiffer>false</organismsDiffer>
    <experiments>2</experiments>
</comment>
<comment type="subcellular location">
    <subcellularLocation>
        <location evidence="9 10">Cytoplasm</location>
        <location evidence="9 10">Cytosol</location>
    </subcellularLocation>
    <subcellularLocation>
        <location evidence="2">Lysosome</location>
    </subcellularLocation>
    <subcellularLocation>
        <location evidence="9 10">Cytoplasmic vesicle</location>
        <location evidence="9 10">Secretory vesicle</location>
    </subcellularLocation>
    <subcellularLocation>
        <location evidence="3">Cell projection</location>
        <location evidence="3">Axon</location>
    </subcellularLocation>
    <subcellularLocation>
        <location evidence="15">Cell membrane</location>
        <topology evidence="15">Lipid-anchor</topology>
        <orientation evidence="15">Cytoplasmic side</orientation>
    </subcellularLocation>
    <subcellularLocation>
        <location evidence="3">Presynapse</location>
    </subcellularLocation>
    <subcellularLocation>
        <location evidence="3">Postsynapse</location>
    </subcellularLocation>
    <text evidence="10">Cycles between a vesicle-associated GTP-bound form and a cytosolic GDP-bound form.</text>
</comment>
<comment type="tissue specificity">
    <text>Detected in brain.</text>
</comment>
<comment type="domain">
    <text evidence="5">Switch 1, switch 2 and the interswitch regions are characteristic of Rab GTPases and mediate the interactions with Rab downstream effectors. The switch regions undergo conformational changes upon nucleotide binding which drives interaction with specific sets of effector proteins, with most effectors only binding to GTP-bound Rab.</text>
</comment>
<comment type="PTM">
    <text evidence="2">Phosphorylation of Thr-86 in the switch II region by LRRK2 prevents the association of RAB regulatory proteins, including CHM and RAB GDP dissociation inhibitors GDI1 and GDI2.</text>
</comment>
<comment type="similarity">
    <text evidence="15">Belongs to the small GTPase superfamily. Rab family.</text>
</comment>
<protein>
    <recommendedName>
        <fullName>Ras-related protein Rab-3A</fullName>
        <ecNumber evidence="2">3.6.5.2</ecNumber>
    </recommendedName>
</protein>
<proteinExistence type="evidence at protein level"/>
<gene>
    <name evidence="16" type="primary">Rab3a</name>
</gene>
<dbReference type="EC" id="3.6.5.2" evidence="2"/>
<dbReference type="EMBL" id="X06889">
    <property type="protein sequence ID" value="CAA30005.1"/>
    <property type="molecule type" value="mRNA"/>
</dbReference>
<dbReference type="EMBL" id="BC087580">
    <property type="protein sequence ID" value="AAH87580.1"/>
    <property type="molecule type" value="mRNA"/>
</dbReference>
<dbReference type="PIR" id="S01765">
    <property type="entry name" value="S01765"/>
</dbReference>
<dbReference type="RefSeq" id="NP_037150.2">
    <property type="nucleotide sequence ID" value="NM_013018.2"/>
</dbReference>
<dbReference type="PDB" id="1ZBD">
    <property type="method" value="X-ray"/>
    <property type="resolution" value="2.60 A"/>
    <property type="chains" value="A=19-217"/>
</dbReference>
<dbReference type="PDB" id="3RAB">
    <property type="method" value="X-ray"/>
    <property type="resolution" value="2.00 A"/>
    <property type="chains" value="A=18-186"/>
</dbReference>
<dbReference type="PDBsum" id="1ZBD"/>
<dbReference type="PDBsum" id="3RAB"/>
<dbReference type="SMR" id="P63012"/>
<dbReference type="BioGRID" id="247563">
    <property type="interactions" value="7"/>
</dbReference>
<dbReference type="CORUM" id="P63012"/>
<dbReference type="FunCoup" id="P63012">
    <property type="interactions" value="1039"/>
</dbReference>
<dbReference type="IntAct" id="P63012">
    <property type="interactions" value="6"/>
</dbReference>
<dbReference type="MINT" id="P63012"/>
<dbReference type="STRING" id="10116.ENSRNOP00000026392"/>
<dbReference type="iPTMnet" id="P63012"/>
<dbReference type="PhosphoSitePlus" id="P63012"/>
<dbReference type="SwissPalm" id="P63012"/>
<dbReference type="jPOST" id="P63012"/>
<dbReference type="PaxDb" id="10116-ENSRNOP00000026392"/>
<dbReference type="GeneID" id="25531"/>
<dbReference type="KEGG" id="rno:25531"/>
<dbReference type="UCSC" id="RGD:3528">
    <property type="organism name" value="rat"/>
</dbReference>
<dbReference type="AGR" id="RGD:3528"/>
<dbReference type="CTD" id="5864"/>
<dbReference type="RGD" id="3528">
    <property type="gene designation" value="Rab3a"/>
</dbReference>
<dbReference type="VEuPathDB" id="HostDB:ENSRNOG00000019433"/>
<dbReference type="eggNOG" id="KOG0093">
    <property type="taxonomic scope" value="Eukaryota"/>
</dbReference>
<dbReference type="HOGENOM" id="CLU_041217_10_1_1"/>
<dbReference type="InParanoid" id="P63012"/>
<dbReference type="OrthoDB" id="4446at9989"/>
<dbReference type="PhylomeDB" id="P63012"/>
<dbReference type="TreeFam" id="TF313199"/>
<dbReference type="Reactome" id="R-RNO-181429">
    <property type="pathway name" value="Serotonin Neurotransmitter Release Cycle"/>
</dbReference>
<dbReference type="Reactome" id="R-RNO-181430">
    <property type="pathway name" value="Norepinephrine Neurotransmitter Release Cycle"/>
</dbReference>
<dbReference type="Reactome" id="R-RNO-210500">
    <property type="pathway name" value="Glutamate Neurotransmitter Release Cycle"/>
</dbReference>
<dbReference type="Reactome" id="R-RNO-212676">
    <property type="pathway name" value="Dopamine Neurotransmitter Release Cycle"/>
</dbReference>
<dbReference type="Reactome" id="R-RNO-264642">
    <property type="pathway name" value="Acetylcholine Neurotransmitter Release Cycle"/>
</dbReference>
<dbReference type="Reactome" id="R-RNO-6798695">
    <property type="pathway name" value="Neutrophil degranulation"/>
</dbReference>
<dbReference type="Reactome" id="R-RNO-8873719">
    <property type="pathway name" value="RAB geranylgeranylation"/>
</dbReference>
<dbReference type="Reactome" id="R-RNO-8876198">
    <property type="pathway name" value="RAB GEFs exchange GTP for GDP on RABs"/>
</dbReference>
<dbReference type="Reactome" id="R-RNO-888590">
    <property type="pathway name" value="GABA synthesis, release, reuptake and degradation"/>
</dbReference>
<dbReference type="EvolutionaryTrace" id="P63012"/>
<dbReference type="PRO" id="PR:P63012"/>
<dbReference type="Proteomes" id="UP000002494">
    <property type="component" value="Chromosome 16"/>
</dbReference>
<dbReference type="Bgee" id="ENSRNOG00000019433">
    <property type="expression patterns" value="Expressed in frontal cortex and 20 other cell types or tissues"/>
</dbReference>
<dbReference type="GO" id="GO:0001669">
    <property type="term" value="C:acrosomal vesicle"/>
    <property type="evidence" value="ECO:0000266"/>
    <property type="project" value="RGD"/>
</dbReference>
<dbReference type="GO" id="GO:0030424">
    <property type="term" value="C:axon"/>
    <property type="evidence" value="ECO:0000314"/>
    <property type="project" value="ParkinsonsUK-UCL"/>
</dbReference>
<dbReference type="GO" id="GO:0005829">
    <property type="term" value="C:cytosol"/>
    <property type="evidence" value="ECO:0007669"/>
    <property type="project" value="UniProtKB-SubCell"/>
</dbReference>
<dbReference type="GO" id="GO:0005768">
    <property type="term" value="C:endosome"/>
    <property type="evidence" value="ECO:0000266"/>
    <property type="project" value="RGD"/>
</dbReference>
<dbReference type="GO" id="GO:0005764">
    <property type="term" value="C:lysosome"/>
    <property type="evidence" value="ECO:0007669"/>
    <property type="project" value="UniProtKB-SubCell"/>
</dbReference>
<dbReference type="GO" id="GO:0048471">
    <property type="term" value="C:perinuclear region of cytoplasm"/>
    <property type="evidence" value="ECO:0000266"/>
    <property type="project" value="RGD"/>
</dbReference>
<dbReference type="GO" id="GO:0005886">
    <property type="term" value="C:plasma membrane"/>
    <property type="evidence" value="ECO:0000318"/>
    <property type="project" value="GO_Central"/>
</dbReference>
<dbReference type="GO" id="GO:0098794">
    <property type="term" value="C:postsynapse"/>
    <property type="evidence" value="ECO:0000250"/>
    <property type="project" value="UniProtKB"/>
</dbReference>
<dbReference type="GO" id="GO:0098793">
    <property type="term" value="C:presynapse"/>
    <property type="evidence" value="ECO:0000266"/>
    <property type="project" value="RGD"/>
</dbReference>
<dbReference type="GO" id="GO:0048786">
    <property type="term" value="C:presynaptic active zone"/>
    <property type="evidence" value="ECO:0000250"/>
    <property type="project" value="UniProtKB"/>
</dbReference>
<dbReference type="GO" id="GO:0032991">
    <property type="term" value="C:protein-containing complex"/>
    <property type="evidence" value="ECO:0000314"/>
    <property type="project" value="RGD"/>
</dbReference>
<dbReference type="GO" id="GO:0030141">
    <property type="term" value="C:secretory granule"/>
    <property type="evidence" value="ECO:0000314"/>
    <property type="project" value="UniProtKB"/>
</dbReference>
<dbReference type="GO" id="GO:0008021">
    <property type="term" value="C:synaptic vesicle"/>
    <property type="evidence" value="ECO:0000314"/>
    <property type="project" value="UniProtKB"/>
</dbReference>
<dbReference type="GO" id="GO:0030672">
    <property type="term" value="C:synaptic vesicle membrane"/>
    <property type="evidence" value="ECO:0000314"/>
    <property type="project" value="SynGO-UCL"/>
</dbReference>
<dbReference type="GO" id="GO:0043195">
    <property type="term" value="C:terminal bouton"/>
    <property type="evidence" value="ECO:0000314"/>
    <property type="project" value="ParkinsonsUK-UCL"/>
</dbReference>
<dbReference type="GO" id="GO:0001671">
    <property type="term" value="F:ATPase activator activity"/>
    <property type="evidence" value="ECO:0000314"/>
    <property type="project" value="RGD"/>
</dbReference>
<dbReference type="GO" id="GO:0051117">
    <property type="term" value="F:ATPase binding"/>
    <property type="evidence" value="ECO:0000353"/>
    <property type="project" value="RGD"/>
</dbReference>
<dbReference type="GO" id="GO:0051021">
    <property type="term" value="F:GDP-dissociation inhibitor binding"/>
    <property type="evidence" value="ECO:0000353"/>
    <property type="project" value="RGD"/>
</dbReference>
<dbReference type="GO" id="GO:0005525">
    <property type="term" value="F:GTP binding"/>
    <property type="evidence" value="ECO:0000314"/>
    <property type="project" value="RGD"/>
</dbReference>
<dbReference type="GO" id="GO:0030742">
    <property type="term" value="F:GTP-dependent protein binding"/>
    <property type="evidence" value="ECO:0000266"/>
    <property type="project" value="RGD"/>
</dbReference>
<dbReference type="GO" id="GO:0003924">
    <property type="term" value="F:GTPase activity"/>
    <property type="evidence" value="ECO:0000266"/>
    <property type="project" value="RGD"/>
</dbReference>
<dbReference type="GO" id="GO:0031489">
    <property type="term" value="F:myosin V binding"/>
    <property type="evidence" value="ECO:0000266"/>
    <property type="project" value="RGD"/>
</dbReference>
<dbReference type="GO" id="GO:0030674">
    <property type="term" value="F:protein-macromolecule adaptor activity"/>
    <property type="evidence" value="ECO:0000266"/>
    <property type="project" value="RGD"/>
</dbReference>
<dbReference type="GO" id="GO:0060478">
    <property type="term" value="P:acrosomal vesicle exocytosis"/>
    <property type="evidence" value="ECO:0000266"/>
    <property type="project" value="RGD"/>
</dbReference>
<dbReference type="GO" id="GO:0007409">
    <property type="term" value="P:axonogenesis"/>
    <property type="evidence" value="ECO:0000266"/>
    <property type="project" value="RGD"/>
</dbReference>
<dbReference type="GO" id="GO:0017156">
    <property type="term" value="P:calcium-ion regulated exocytosis"/>
    <property type="evidence" value="ECO:0000266"/>
    <property type="project" value="RGD"/>
</dbReference>
<dbReference type="GO" id="GO:0051649">
    <property type="term" value="P:establishment of localization in cell"/>
    <property type="evidence" value="ECO:0000266"/>
    <property type="project" value="RGD"/>
</dbReference>
<dbReference type="GO" id="GO:0061670">
    <property type="term" value="P:evoked neurotransmitter secretion"/>
    <property type="evidence" value="ECO:0000266"/>
    <property type="project" value="RGD"/>
</dbReference>
<dbReference type="GO" id="GO:0006887">
    <property type="term" value="P:exocytosis"/>
    <property type="evidence" value="ECO:0000266"/>
    <property type="project" value="RGD"/>
</dbReference>
<dbReference type="GO" id="GO:0030073">
    <property type="term" value="P:insulin secretion"/>
    <property type="evidence" value="ECO:0000266"/>
    <property type="project" value="RGD"/>
</dbReference>
<dbReference type="GO" id="GO:0030324">
    <property type="term" value="P:lung development"/>
    <property type="evidence" value="ECO:0000266"/>
    <property type="project" value="RGD"/>
</dbReference>
<dbReference type="GO" id="GO:0032418">
    <property type="term" value="P:lysosome localization"/>
    <property type="evidence" value="ECO:0000266"/>
    <property type="project" value="RGD"/>
</dbReference>
<dbReference type="GO" id="GO:0048790">
    <property type="term" value="P:maintenance of presynaptic active zone structure"/>
    <property type="evidence" value="ECO:0000266"/>
    <property type="project" value="RGD"/>
</dbReference>
<dbReference type="GO" id="GO:0007005">
    <property type="term" value="P:mitochondrion organization"/>
    <property type="evidence" value="ECO:0000266"/>
    <property type="project" value="RGD"/>
</dbReference>
<dbReference type="GO" id="GO:0007274">
    <property type="term" value="P:neuromuscular synaptic transmission"/>
    <property type="evidence" value="ECO:0000266"/>
    <property type="project" value="RGD"/>
</dbReference>
<dbReference type="GO" id="GO:0001778">
    <property type="term" value="P:plasma membrane repair"/>
    <property type="evidence" value="ECO:0000266"/>
    <property type="project" value="RGD"/>
</dbReference>
<dbReference type="GO" id="GO:1903307">
    <property type="term" value="P:positive regulation of regulated secretory pathway"/>
    <property type="evidence" value="ECO:0000266"/>
    <property type="project" value="RGD"/>
</dbReference>
<dbReference type="GO" id="GO:0009791">
    <property type="term" value="P:post-embryonic development"/>
    <property type="evidence" value="ECO:0000266"/>
    <property type="project" value="RGD"/>
</dbReference>
<dbReference type="GO" id="GO:0032482">
    <property type="term" value="P:Rab protein signal transduction"/>
    <property type="evidence" value="ECO:0000305"/>
    <property type="project" value="RGD"/>
</dbReference>
<dbReference type="GO" id="GO:0045055">
    <property type="term" value="P:regulated exocytosis"/>
    <property type="evidence" value="ECO:0000266"/>
    <property type="project" value="RGD"/>
</dbReference>
<dbReference type="GO" id="GO:0014059">
    <property type="term" value="P:regulation of dopamine secretion"/>
    <property type="evidence" value="ECO:0000314"/>
    <property type="project" value="CACAO"/>
</dbReference>
<dbReference type="GO" id="GO:0017157">
    <property type="term" value="P:regulation of exocytosis"/>
    <property type="evidence" value="ECO:0000266"/>
    <property type="project" value="RGD"/>
</dbReference>
<dbReference type="GO" id="GO:1905684">
    <property type="term" value="P:regulation of plasma membrane repair"/>
    <property type="evidence" value="ECO:0000266"/>
    <property type="project" value="RGD"/>
</dbReference>
<dbReference type="GO" id="GO:0099161">
    <property type="term" value="P:regulation of presynaptic dense core granule exocytosis"/>
    <property type="evidence" value="ECO:0000266"/>
    <property type="project" value="RGD"/>
</dbReference>
<dbReference type="GO" id="GO:0048172">
    <property type="term" value="P:regulation of short-term neuronal synaptic plasticity"/>
    <property type="evidence" value="ECO:0000250"/>
    <property type="project" value="ParkinsonsUK-UCL"/>
</dbReference>
<dbReference type="GO" id="GO:2000300">
    <property type="term" value="P:regulation of synaptic vesicle exocytosis"/>
    <property type="evidence" value="ECO:0000314"/>
    <property type="project" value="UniProtKB"/>
</dbReference>
<dbReference type="GO" id="GO:0031630">
    <property type="term" value="P:regulation of synaptic vesicle fusion to presynaptic active zone membrane"/>
    <property type="evidence" value="ECO:0000250"/>
    <property type="project" value="ParkinsonsUK-UCL"/>
</dbReference>
<dbReference type="GO" id="GO:0010807">
    <property type="term" value="P:regulation of synaptic vesicle priming"/>
    <property type="evidence" value="ECO:0000314"/>
    <property type="project" value="UniProtKB"/>
</dbReference>
<dbReference type="GO" id="GO:0003016">
    <property type="term" value="P:respiratory system process"/>
    <property type="evidence" value="ECO:0000266"/>
    <property type="project" value="RGD"/>
</dbReference>
<dbReference type="GO" id="GO:0051602">
    <property type="term" value="P:response to electrical stimulus"/>
    <property type="evidence" value="ECO:0000266"/>
    <property type="project" value="RGD"/>
</dbReference>
<dbReference type="GO" id="GO:0050975">
    <property type="term" value="P:sensory perception of touch"/>
    <property type="evidence" value="ECO:0000266"/>
    <property type="project" value="RGD"/>
</dbReference>
<dbReference type="GO" id="GO:0097091">
    <property type="term" value="P:synaptic vesicle clustering"/>
    <property type="evidence" value="ECO:0000266"/>
    <property type="project" value="RGD"/>
</dbReference>
<dbReference type="GO" id="GO:0016079">
    <property type="term" value="P:synaptic vesicle exocytosis"/>
    <property type="evidence" value="ECO:0000315"/>
    <property type="project" value="ParkinsonsUK-UCL"/>
</dbReference>
<dbReference type="GO" id="GO:0016188">
    <property type="term" value="P:synaptic vesicle maturation"/>
    <property type="evidence" value="ECO:0000266"/>
    <property type="project" value="RGD"/>
</dbReference>
<dbReference type="GO" id="GO:0036465">
    <property type="term" value="P:synaptic vesicle recycling"/>
    <property type="evidence" value="ECO:0000315"/>
    <property type="project" value="ParkinsonsUK-UCL"/>
</dbReference>
<dbReference type="GO" id="GO:0048489">
    <property type="term" value="P:synaptic vesicle transport"/>
    <property type="evidence" value="ECO:0000266"/>
    <property type="project" value="RGD"/>
</dbReference>
<dbReference type="CDD" id="cd01865">
    <property type="entry name" value="Rab3"/>
    <property type="match status" value="1"/>
</dbReference>
<dbReference type="FunFam" id="3.40.50.300:FF:000206">
    <property type="entry name" value="Ras-related protein Rab-3C"/>
    <property type="match status" value="1"/>
</dbReference>
<dbReference type="Gene3D" id="3.40.50.300">
    <property type="entry name" value="P-loop containing nucleotide triphosphate hydrolases"/>
    <property type="match status" value="1"/>
</dbReference>
<dbReference type="InterPro" id="IPR027417">
    <property type="entry name" value="P-loop_NTPase"/>
</dbReference>
<dbReference type="InterPro" id="IPR037872">
    <property type="entry name" value="Rab3"/>
</dbReference>
<dbReference type="InterPro" id="IPR005225">
    <property type="entry name" value="Small_GTP-bd"/>
</dbReference>
<dbReference type="InterPro" id="IPR001806">
    <property type="entry name" value="Small_GTPase"/>
</dbReference>
<dbReference type="InterPro" id="IPR050305">
    <property type="entry name" value="Small_GTPase_Rab"/>
</dbReference>
<dbReference type="NCBIfam" id="TIGR00231">
    <property type="entry name" value="small_GTP"/>
    <property type="match status" value="1"/>
</dbReference>
<dbReference type="PANTHER" id="PTHR47980">
    <property type="entry name" value="LD44762P"/>
    <property type="match status" value="1"/>
</dbReference>
<dbReference type="Pfam" id="PF00071">
    <property type="entry name" value="Ras"/>
    <property type="match status" value="1"/>
</dbReference>
<dbReference type="PRINTS" id="PR00449">
    <property type="entry name" value="RASTRNSFRMNG"/>
</dbReference>
<dbReference type="SMART" id="SM00175">
    <property type="entry name" value="RAB"/>
    <property type="match status" value="1"/>
</dbReference>
<dbReference type="SMART" id="SM00176">
    <property type="entry name" value="RAN"/>
    <property type="match status" value="1"/>
</dbReference>
<dbReference type="SMART" id="SM00173">
    <property type="entry name" value="RAS"/>
    <property type="match status" value="1"/>
</dbReference>
<dbReference type="SMART" id="SM00174">
    <property type="entry name" value="RHO"/>
    <property type="match status" value="1"/>
</dbReference>
<dbReference type="SUPFAM" id="SSF52540">
    <property type="entry name" value="P-loop containing nucleoside triphosphate hydrolases"/>
    <property type="match status" value="1"/>
</dbReference>
<dbReference type="PROSITE" id="PS51419">
    <property type="entry name" value="RAB"/>
    <property type="match status" value="1"/>
</dbReference>
<evidence type="ECO:0000250" key="1"/>
<evidence type="ECO:0000250" key="2">
    <source>
        <dbReference type="UniProtKB" id="P20336"/>
    </source>
</evidence>
<evidence type="ECO:0000250" key="3">
    <source>
        <dbReference type="UniProtKB" id="P63011"/>
    </source>
</evidence>
<evidence type="ECO:0000256" key="4">
    <source>
        <dbReference type="SAM" id="MobiDB-lite"/>
    </source>
</evidence>
<evidence type="ECO:0000269" key="5">
    <source>
    </source>
</evidence>
<evidence type="ECO:0000269" key="6">
    <source>
    </source>
</evidence>
<evidence type="ECO:0000269" key="7">
    <source>
    </source>
</evidence>
<evidence type="ECO:0000269" key="8">
    <source>
    </source>
</evidence>
<evidence type="ECO:0000269" key="9">
    <source>
    </source>
</evidence>
<evidence type="ECO:0000269" key="10">
    <source>
    </source>
</evidence>
<evidence type="ECO:0000269" key="11">
    <source>
    </source>
</evidence>
<evidence type="ECO:0000269" key="12">
    <source>
    </source>
</evidence>
<evidence type="ECO:0000269" key="13">
    <source>
    </source>
</evidence>
<evidence type="ECO:0000269" key="14">
    <source>
    </source>
</evidence>
<evidence type="ECO:0000305" key="15"/>
<evidence type="ECO:0000312" key="16">
    <source>
        <dbReference type="RGD" id="3528"/>
    </source>
</evidence>
<evidence type="ECO:0007744" key="17">
    <source>
        <dbReference type="PDB" id="1ZBD"/>
    </source>
</evidence>
<evidence type="ECO:0007744" key="18">
    <source>
        <dbReference type="PDB" id="3RAB"/>
    </source>
</evidence>
<evidence type="ECO:0007744" key="19">
    <source>
    </source>
</evidence>
<evidence type="ECO:0007829" key="20">
    <source>
        <dbReference type="PDB" id="3RAB"/>
    </source>
</evidence>
<feature type="chain" id="PRO_0000121079" description="Ras-related protein Rab-3A">
    <location>
        <begin position="1"/>
        <end position="220"/>
    </location>
</feature>
<feature type="region of interest" description="Disordered" evidence="4">
    <location>
        <begin position="194"/>
        <end position="220"/>
    </location>
</feature>
<feature type="short sequence motif" description="Switch 1" evidence="5 17">
    <location>
        <begin position="49"/>
        <end position="58"/>
    </location>
</feature>
<feature type="short sequence motif" description="Switch 2" evidence="5 17">
    <location>
        <begin position="80"/>
        <end position="96"/>
    </location>
</feature>
<feature type="binding site" evidence="5 17">
    <location>
        <position position="31"/>
    </location>
    <ligand>
        <name>GTP</name>
        <dbReference type="ChEBI" id="CHEBI:37565"/>
    </ligand>
</feature>
<feature type="binding site" evidence="5 17">
    <location>
        <position position="32"/>
    </location>
    <ligand>
        <name>GTP</name>
        <dbReference type="ChEBI" id="CHEBI:37565"/>
    </ligand>
</feature>
<feature type="binding site" evidence="5 17">
    <location>
        <position position="33"/>
    </location>
    <ligand>
        <name>GTP</name>
        <dbReference type="ChEBI" id="CHEBI:37565"/>
    </ligand>
</feature>
<feature type="binding site" evidence="5 17">
    <location>
        <position position="34"/>
    </location>
    <ligand>
        <name>GTP</name>
        <dbReference type="ChEBI" id="CHEBI:37565"/>
    </ligand>
</feature>
<feature type="binding site" evidence="5 17">
    <location>
        <position position="35"/>
    </location>
    <ligand>
        <name>GTP</name>
        <dbReference type="ChEBI" id="CHEBI:37565"/>
    </ligand>
</feature>
<feature type="binding site" evidence="5 17">
    <location>
        <position position="36"/>
    </location>
    <ligand>
        <name>GTP</name>
        <dbReference type="ChEBI" id="CHEBI:37565"/>
    </ligand>
</feature>
<feature type="binding site" evidence="5 6 17 18">
    <location>
        <position position="36"/>
    </location>
    <ligand>
        <name>Mg(2+)</name>
        <dbReference type="ChEBI" id="CHEBI:18420"/>
    </ligand>
</feature>
<feature type="binding site" evidence="5 17">
    <location>
        <position position="37"/>
    </location>
    <ligand>
        <name>GTP</name>
        <dbReference type="ChEBI" id="CHEBI:37565"/>
    </ligand>
</feature>
<feature type="binding site" evidence="5 17">
    <location>
        <position position="48"/>
    </location>
    <ligand>
        <name>GTP</name>
        <dbReference type="ChEBI" id="CHEBI:37565"/>
    </ligand>
</feature>
<feature type="binding site" evidence="5 17">
    <location>
        <position position="49"/>
    </location>
    <ligand>
        <name>GTP</name>
        <dbReference type="ChEBI" id="CHEBI:37565"/>
    </ligand>
</feature>
<feature type="binding site" evidence="5 17">
    <location>
        <position position="53"/>
    </location>
    <ligand>
        <name>GTP</name>
        <dbReference type="ChEBI" id="CHEBI:37565"/>
    </ligand>
</feature>
<feature type="binding site" evidence="5 17">
    <location>
        <position position="54"/>
    </location>
    <ligand>
        <name>GTP</name>
        <dbReference type="ChEBI" id="CHEBI:37565"/>
    </ligand>
</feature>
<feature type="binding site" evidence="5 6 17 18">
    <location>
        <position position="54"/>
    </location>
    <ligand>
        <name>Mg(2+)</name>
        <dbReference type="ChEBI" id="CHEBI:18420"/>
    </ligand>
</feature>
<feature type="binding site" evidence="6 18">
    <location>
        <position position="77"/>
    </location>
    <ligand>
        <name>Mg(2+)</name>
        <dbReference type="ChEBI" id="CHEBI:18420"/>
    </ligand>
</feature>
<feature type="binding site" evidence="5 17">
    <location>
        <position position="80"/>
    </location>
    <ligand>
        <name>GTP</name>
        <dbReference type="ChEBI" id="CHEBI:37565"/>
    </ligand>
</feature>
<feature type="binding site" evidence="5 17">
    <location>
        <position position="135"/>
    </location>
    <ligand>
        <name>GTP</name>
        <dbReference type="ChEBI" id="CHEBI:37565"/>
    </ligand>
</feature>
<feature type="binding site" evidence="5 17">
    <location>
        <position position="136"/>
    </location>
    <ligand>
        <name>GTP</name>
        <dbReference type="ChEBI" id="CHEBI:37565"/>
    </ligand>
</feature>
<feature type="binding site" evidence="5 17">
    <location>
        <position position="138"/>
    </location>
    <ligand>
        <name>GTP</name>
        <dbReference type="ChEBI" id="CHEBI:37565"/>
    </ligand>
</feature>
<feature type="binding site" evidence="5 17">
    <location>
        <position position="166"/>
    </location>
    <ligand>
        <name>GTP</name>
        <dbReference type="ChEBI" id="CHEBI:37565"/>
    </ligand>
</feature>
<feature type="binding site" evidence="5 17">
    <location>
        <position position="167"/>
    </location>
    <ligand>
        <name>GTP</name>
        <dbReference type="ChEBI" id="CHEBI:37565"/>
    </ligand>
</feature>
<feature type="modified residue" description="Phosphothreonine" evidence="2">
    <location>
        <position position="86"/>
    </location>
</feature>
<feature type="modified residue" description="Phosphoserine" evidence="19">
    <location>
        <position position="188"/>
    </location>
</feature>
<feature type="modified residue" description="Phosphoserine" evidence="19">
    <location>
        <position position="190"/>
    </location>
</feature>
<feature type="modified residue" description="Cysteine methyl ester" evidence="1">
    <location>
        <position position="220"/>
    </location>
</feature>
<feature type="lipid moiety-binding region" description="S-geranylgeranyl cysteine" evidence="1">
    <location>
        <position position="218"/>
    </location>
</feature>
<feature type="lipid moiety-binding region" description="S-geranylgeranyl cysteine" evidence="1">
    <location>
        <position position="220"/>
    </location>
</feature>
<feature type="mutagenesis site" description="No significant effect on interaction with RAB3IP." evidence="13">
    <original>T</original>
    <variation>N</variation>
    <location>
        <position position="36"/>
    </location>
</feature>
<feature type="mutagenesis site" description="Disrupts the interaction with RAB3IP." evidence="13">
    <original>F</original>
    <variation>L</variation>
    <location>
        <position position="51"/>
    </location>
</feature>
<feature type="mutagenesis site" description="No significant effect on interaction with RAB3IP." evidence="13">
    <original>V</original>
    <variation>A</variation>
    <location>
        <position position="52"/>
    </location>
</feature>
<feature type="mutagenesis site" description="Disrupts the interaction with RAB3IP." evidence="13">
    <original>V</original>
    <variation>E</variation>
    <location>
        <position position="55"/>
    </location>
</feature>
<feature type="mutagenesis site" description="Disrupts the interaction with RAB3IP." evidence="13">
    <original>G</original>
    <variation>D</variation>
    <location>
        <position position="56"/>
    </location>
</feature>
<feature type="sequence conflict" description="In Ref. 2; CAA30005." evidence="15" ref="2">
    <original>P</original>
    <variation>L</variation>
    <location>
        <position position="196"/>
    </location>
</feature>
<feature type="strand" evidence="20">
    <location>
        <begin position="20"/>
        <end position="28"/>
    </location>
</feature>
<feature type="helix" evidence="20">
    <location>
        <begin position="35"/>
        <end position="44"/>
    </location>
</feature>
<feature type="strand" evidence="20">
    <location>
        <begin position="56"/>
        <end position="66"/>
    </location>
</feature>
<feature type="strand" evidence="20">
    <location>
        <begin position="69"/>
        <end position="78"/>
    </location>
</feature>
<feature type="helix" evidence="20">
    <location>
        <begin position="82"/>
        <end position="84"/>
    </location>
</feature>
<feature type="helix" evidence="20">
    <location>
        <begin position="85"/>
        <end position="89"/>
    </location>
</feature>
<feature type="turn" evidence="20">
    <location>
        <begin position="90"/>
        <end position="94"/>
    </location>
</feature>
<feature type="strand" evidence="20">
    <location>
        <begin position="97"/>
        <end position="103"/>
    </location>
</feature>
<feature type="helix" evidence="20">
    <location>
        <begin position="107"/>
        <end position="111"/>
    </location>
</feature>
<feature type="helix" evidence="20">
    <location>
        <begin position="113"/>
        <end position="123"/>
    </location>
</feature>
<feature type="strand" evidence="20">
    <location>
        <begin position="129"/>
        <end position="135"/>
    </location>
</feature>
<feature type="helix" evidence="20">
    <location>
        <begin position="140"/>
        <end position="142"/>
    </location>
</feature>
<feature type="helix" evidence="20">
    <location>
        <begin position="147"/>
        <end position="157"/>
    </location>
</feature>
<feature type="strand" evidence="20">
    <location>
        <begin position="160"/>
        <end position="163"/>
    </location>
</feature>
<feature type="turn" evidence="20">
    <location>
        <begin position="166"/>
        <end position="169"/>
    </location>
</feature>
<feature type="helix" evidence="20">
    <location>
        <begin position="172"/>
        <end position="184"/>
    </location>
</feature>
<organism>
    <name type="scientific">Rattus norvegicus</name>
    <name type="common">Rat</name>
    <dbReference type="NCBI Taxonomy" id="10116"/>
    <lineage>
        <taxon>Eukaryota</taxon>
        <taxon>Metazoa</taxon>
        <taxon>Chordata</taxon>
        <taxon>Craniata</taxon>
        <taxon>Vertebrata</taxon>
        <taxon>Euteleostomi</taxon>
        <taxon>Mammalia</taxon>
        <taxon>Eutheria</taxon>
        <taxon>Euarchontoglires</taxon>
        <taxon>Glires</taxon>
        <taxon>Rodentia</taxon>
        <taxon>Myomorpha</taxon>
        <taxon>Muroidea</taxon>
        <taxon>Muridae</taxon>
        <taxon>Murinae</taxon>
        <taxon>Rattus</taxon>
    </lineage>
</organism>
<accession>P63012</accession>
<accession>P05713</accession>
<reference key="1">
    <citation type="journal article" date="1987" name="Proc. Natl. Acad. Sci. U.S.A.">
        <title>Four additional members of the ras gene superfamily isolated by an oligonucleotide strategy: molecular cloning of YPT-related cDNAs from a rat brain library.</title>
        <authorList>
            <person name="Touchot N."/>
            <person name="Chardin P."/>
            <person name="Tavitian A."/>
        </authorList>
    </citation>
    <scope>NUCLEOTIDE SEQUENCE [MRNA]</scope>
    <source>
        <tissue>Brain</tissue>
    </source>
</reference>
<reference key="2">
    <citation type="journal article" date="1988" name="Nucleic Acids Res.">
        <title>Complete coding sequences of the ras related rab 3 and 4 cDNAs.</title>
        <authorList>
            <person name="Zahraoui A."/>
            <person name="Touchot N."/>
            <person name="Chardin P."/>
            <person name="Tavitian A."/>
        </authorList>
    </citation>
    <scope>NUCLEOTIDE SEQUENCE [MRNA]</scope>
    <source>
        <tissue>Brain</tissue>
    </source>
</reference>
<reference key="3">
    <citation type="journal article" date="2004" name="Genome Res.">
        <title>The status, quality, and expansion of the NIH full-length cDNA project: the Mammalian Gene Collection (MGC).</title>
        <authorList>
            <consortium name="The MGC Project Team"/>
        </authorList>
    </citation>
    <scope>NUCLEOTIDE SEQUENCE [LARGE SCALE MRNA]</scope>
    <source>
        <tissue>Brain</tissue>
    </source>
</reference>
<reference key="4">
    <citation type="journal article" date="1994" name="Trends Endocrinol. Metab.">
        <title>Role of the Rab3A GTPase in regulated secretion from neuroendocrine cells.</title>
        <authorList>
            <person name="Macara I.G."/>
        </authorList>
    </citation>
    <scope>FUNCTION</scope>
    <scope>SUBCELLULAR LOCATION</scope>
</reference>
<reference key="5">
    <citation type="journal article" date="1995" name="Mol. Cell. Biol.">
        <title>Interaction cloning of Rabin3, a novel protein that associates with the Ras-like GTPase Rab3A.</title>
        <authorList>
            <person name="Brondyk W.H."/>
            <person name="McKiernan C.J."/>
            <person name="Fortner K.A."/>
            <person name="Stabila P."/>
            <person name="Holz R.W."/>
            <person name="Macara I.G."/>
        </authorList>
    </citation>
    <scope>INTERACTION WITH RAB3IP</scope>
    <scope>MUTAGENESIS OF THR-36; PHE-51; VAL-52; VAL-55 AND GLY-56</scope>
    <scope>ACTIVITY REGULATION</scope>
</reference>
<reference key="6">
    <citation type="journal article" date="1997" name="J. Biol. Chem.">
        <title>Isolation and characterization of a GDP/GTP exchange protein specific for the Rab3 subfamily small G proteins.</title>
        <authorList>
            <person name="Wada M."/>
            <person name="Nakanishi H."/>
            <person name="Satoh A."/>
            <person name="Hirano H."/>
            <person name="Obaishi H."/>
            <person name="Matsuura Y."/>
            <person name="Takai Y."/>
        </authorList>
    </citation>
    <scope>ACTIVITY REGULATION</scope>
</reference>
<reference key="7">
    <citation type="journal article" date="2000" name="J. Biol. Chem.">
        <title>The RIM/NIM family of neuronal C2 domain proteins. Interactions with Rab3 and a new class of Src homology 3 domain proteins.</title>
        <authorList>
            <person name="Wang Y."/>
            <person name="Sugita S."/>
            <person name="Suedhof T.C."/>
        </authorList>
    </citation>
    <scope>INTERACTION WITH RIMS2</scope>
</reference>
<reference key="8">
    <citation type="journal article" date="2007" name="J. Cell Sci.">
        <title>Differential dynamics of Rab3A and Rab27A on secretory granules.</title>
        <authorList>
            <person name="Handley M.T."/>
            <person name="Haynes L.P."/>
            <person name="Burgoyne R.D."/>
        </authorList>
    </citation>
    <scope>SUBCELLULAR LOCATION</scope>
</reference>
<reference key="9">
    <citation type="journal article" date="2007" name="J. Cell. Physiol.">
        <title>Visualization of Rab3A dissociation during exocytosis: a study by total internal reflection microscopy.</title>
        <authorList>
            <person name="Lin C.C."/>
            <person name="Huang C.C."/>
            <person name="Lin K.H."/>
            <person name="Cheng K.H."/>
            <person name="Yang D.M."/>
            <person name="Tsai Y.S."/>
            <person name="Ong R.Y."/>
            <person name="Huang Y.N."/>
            <person name="Kao L.S."/>
        </authorList>
    </citation>
    <scope>FUNCTION</scope>
</reference>
<reference key="10">
    <citation type="journal article" date="2011" name="Traffic">
        <title>Involvement of Rab3A in vesicle priming during exocytosis: interaction with Munc13-1 and Munc18-1.</title>
        <authorList>
            <person name="Huang C.C."/>
            <person name="Yang D.M."/>
            <person name="Lin C.C."/>
            <person name="Kao L.S."/>
        </authorList>
    </citation>
    <scope>FUNCTION</scope>
    <scope>INTERACTION WITH STXBP1</scope>
</reference>
<reference key="11">
    <citation type="journal article" date="2012" name="Nat. Commun.">
        <title>Quantitative maps of protein phosphorylation sites across 14 different rat organs and tissues.</title>
        <authorList>
            <person name="Lundby A."/>
            <person name="Secher A."/>
            <person name="Lage K."/>
            <person name="Nordsborg N.B."/>
            <person name="Dmytriyev A."/>
            <person name="Lundby C."/>
            <person name="Olsen J.V."/>
        </authorList>
    </citation>
    <scope>PHOSPHORYLATION [LARGE SCALE ANALYSIS] AT SER-188 AND SER-190</scope>
    <scope>IDENTIFICATION BY MASS SPECTROMETRY [LARGE SCALE ANALYSIS]</scope>
</reference>
<reference key="12">
    <citation type="journal article" date="2017" name="Int. J. Biol. Macromol.">
        <title>Localization of Rab3A-binding site on C2A domain of synaptotagmin I to reveal its regulatory mechanism.</title>
        <authorList>
            <person name="Tang X."/>
            <person name="Xie C."/>
            <person name="Wang Y."/>
            <person name="Wang X."/>
        </authorList>
    </citation>
    <scope>FUNCTION</scope>
    <scope>INTERACTION WITH SYT1</scope>
</reference>
<reference evidence="17" key="13">
    <citation type="journal article" date="1999" name="Cell">
        <title>Structural basis of Rab effector specificity: crystal structure of the small G protein Rab3A complexed with the effector domain of rabphilin-3A.</title>
        <authorList>
            <person name="Ostermeier C."/>
            <person name="Brunger A.T."/>
        </authorList>
    </citation>
    <scope>X-RAY CRYSTALLOGRAPHY (2.6 ANGSTROMS) OF 19-217 IN COMPLEX WITH GTP; MG(2+) AND RPH3A</scope>
    <scope>INTERACTION WITH RPH3A</scope>
    <scope>COFACTOR</scope>
    <scope>DOMAIN</scope>
</reference>
<reference evidence="18" key="14">
    <citation type="journal article" date="1999" name="Structure">
        <title>Structural basis of activation and GTP hydrolysis in rab proteins.</title>
        <authorList>
            <person name="Dumas J.J."/>
            <person name="Zhu Z."/>
            <person name="Connolly J.L."/>
            <person name="Lambright D.G."/>
        </authorList>
    </citation>
    <scope>X-RAY CRYSTALLOGRAPHY (2.0 ANGSTROMS) OF 18-186 IN COMPLEX WITH GTP ANALOG AND MG(2+)</scope>
    <scope>COFACTOR</scope>
</reference>
<keyword id="KW-0002">3D-structure</keyword>
<keyword id="KW-1003">Cell membrane</keyword>
<keyword id="KW-0966">Cell projection</keyword>
<keyword id="KW-0963">Cytoplasm</keyword>
<keyword id="KW-0968">Cytoplasmic vesicle</keyword>
<keyword id="KW-0268">Exocytosis</keyword>
<keyword id="KW-0342">GTP-binding</keyword>
<keyword id="KW-0378">Hydrolase</keyword>
<keyword id="KW-0449">Lipoprotein</keyword>
<keyword id="KW-0458">Lysosome</keyword>
<keyword id="KW-0472">Membrane</keyword>
<keyword id="KW-0488">Methylation</keyword>
<keyword id="KW-0547">Nucleotide-binding</keyword>
<keyword id="KW-0597">Phosphoprotein</keyword>
<keyword id="KW-0636">Prenylation</keyword>
<keyword id="KW-0653">Protein transport</keyword>
<keyword id="KW-1185">Reference proteome</keyword>
<keyword id="KW-0770">Synapse</keyword>
<keyword id="KW-0813">Transport</keyword>
<name>RAB3A_RAT</name>